<feature type="chain" id="PRO_0000369199" description="Adenylyltransferase and sulfurtransferase MOCS3">
    <location>
        <begin position="1"/>
        <end position="437"/>
    </location>
</feature>
<feature type="domain" description="Rhodanese" evidence="2">
    <location>
        <begin position="337"/>
        <end position="435"/>
    </location>
</feature>
<feature type="active site" description="Glycyl thioester intermediate; for adenylyltransferase activity" evidence="2">
    <location>
        <position position="229"/>
    </location>
</feature>
<feature type="active site" description="Cysteine persulfide intermediate; for sulfurtransferase activity" evidence="2">
    <location>
        <position position="391"/>
    </location>
</feature>
<feature type="binding site" evidence="2">
    <location>
        <position position="82"/>
    </location>
    <ligand>
        <name>ATP</name>
        <dbReference type="ChEBI" id="CHEBI:30616"/>
    </ligand>
</feature>
<feature type="binding site" evidence="2">
    <location>
        <position position="103"/>
    </location>
    <ligand>
        <name>ATP</name>
        <dbReference type="ChEBI" id="CHEBI:30616"/>
    </ligand>
</feature>
<feature type="binding site" evidence="2">
    <location>
        <begin position="110"/>
        <end position="114"/>
    </location>
    <ligand>
        <name>ATP</name>
        <dbReference type="ChEBI" id="CHEBI:30616"/>
    </ligand>
</feature>
<feature type="binding site" evidence="2">
    <location>
        <position position="127"/>
    </location>
    <ligand>
        <name>ATP</name>
        <dbReference type="ChEBI" id="CHEBI:30616"/>
    </ligand>
</feature>
<feature type="binding site" evidence="2">
    <location>
        <begin position="171"/>
        <end position="172"/>
    </location>
    <ligand>
        <name>ATP</name>
        <dbReference type="ChEBI" id="CHEBI:30616"/>
    </ligand>
</feature>
<feature type="binding site" evidence="2">
    <location>
        <position position="212"/>
    </location>
    <ligand>
        <name>Zn(2+)</name>
        <dbReference type="ChEBI" id="CHEBI:29105"/>
    </ligand>
</feature>
<feature type="binding site" evidence="2">
    <location>
        <position position="215"/>
    </location>
    <ligand>
        <name>Zn(2+)</name>
        <dbReference type="ChEBI" id="CHEBI:29105"/>
    </ligand>
</feature>
<feature type="binding site" evidence="2">
    <location>
        <position position="287"/>
    </location>
    <ligand>
        <name>Zn(2+)</name>
        <dbReference type="ChEBI" id="CHEBI:29105"/>
    </ligand>
</feature>
<feature type="binding site" evidence="2">
    <location>
        <position position="290"/>
    </location>
    <ligand>
        <name>Zn(2+)</name>
        <dbReference type="ChEBI" id="CHEBI:29105"/>
    </ligand>
</feature>
<protein>
    <recommendedName>
        <fullName evidence="2">Adenylyltransferase and sulfurtransferase MOCS3</fullName>
    </recommendedName>
    <alternativeName>
        <fullName evidence="2">Molybdenum cofactor synthesis protein 3</fullName>
    </alternativeName>
    <domain>
        <recommendedName>
            <fullName evidence="2">Molybdopterin-synthase adenylyltransferase</fullName>
            <ecNumber evidence="2">2.7.7.80</ecNumber>
        </recommendedName>
        <alternativeName>
            <fullName evidence="2">Adenylyltransferase MOCS3</fullName>
        </alternativeName>
        <alternativeName>
            <fullName evidence="2">Sulfur carrier protein MOCS2A adenylyltransferase</fullName>
        </alternativeName>
    </domain>
    <domain>
        <recommendedName>
            <fullName evidence="2">Molybdopterin-synthase sulfurtransferase</fullName>
            <ecNumber evidence="2">2.8.1.11</ecNumber>
        </recommendedName>
        <alternativeName>
            <fullName evidence="2">Sulfur carrier protein MOCS2A sulfurtransferase</fullName>
        </alternativeName>
        <alternativeName>
            <fullName evidence="2">Sulfurtransferase MOCS3</fullName>
        </alternativeName>
    </domain>
</protein>
<name>MOCS3_AEDAE</name>
<evidence type="ECO:0000250" key="1">
    <source>
        <dbReference type="UniProtKB" id="O95396"/>
    </source>
</evidence>
<evidence type="ECO:0000255" key="2">
    <source>
        <dbReference type="HAMAP-Rule" id="MF_03049"/>
    </source>
</evidence>
<reference key="1">
    <citation type="journal article" date="2007" name="Science">
        <title>Genome sequence of Aedes aegypti, a major arbovirus vector.</title>
        <authorList>
            <person name="Nene V."/>
            <person name="Wortman J.R."/>
            <person name="Lawson D."/>
            <person name="Haas B.J."/>
            <person name="Kodira C.D."/>
            <person name="Tu Z.J."/>
            <person name="Loftus B.J."/>
            <person name="Xi Z."/>
            <person name="Megy K."/>
            <person name="Grabherr M."/>
            <person name="Ren Q."/>
            <person name="Zdobnov E.M."/>
            <person name="Lobo N.F."/>
            <person name="Campbell K.S."/>
            <person name="Brown S.E."/>
            <person name="Bonaldo M.F."/>
            <person name="Zhu J."/>
            <person name="Sinkins S.P."/>
            <person name="Hogenkamp D.G."/>
            <person name="Amedeo P."/>
            <person name="Arensburger P."/>
            <person name="Atkinson P.W."/>
            <person name="Bidwell S.L."/>
            <person name="Biedler J."/>
            <person name="Birney E."/>
            <person name="Bruggner R.V."/>
            <person name="Costas J."/>
            <person name="Coy M.R."/>
            <person name="Crabtree J."/>
            <person name="Crawford M."/>
            <person name="DeBruyn B."/>
            <person name="DeCaprio D."/>
            <person name="Eiglmeier K."/>
            <person name="Eisenstadt E."/>
            <person name="El-Dorry H."/>
            <person name="Gelbart W.M."/>
            <person name="Gomes S.L."/>
            <person name="Hammond M."/>
            <person name="Hannick L.I."/>
            <person name="Hogan J.R."/>
            <person name="Holmes M.H."/>
            <person name="Jaffe D."/>
            <person name="Johnston S.J."/>
            <person name="Kennedy R.C."/>
            <person name="Koo H."/>
            <person name="Kravitz S."/>
            <person name="Kriventseva E.V."/>
            <person name="Kulp D."/>
            <person name="Labutti K."/>
            <person name="Lee E."/>
            <person name="Li S."/>
            <person name="Lovin D.D."/>
            <person name="Mao C."/>
            <person name="Mauceli E."/>
            <person name="Menck C.F."/>
            <person name="Miller J.R."/>
            <person name="Montgomery P."/>
            <person name="Mori A."/>
            <person name="Nascimento A.L."/>
            <person name="Naveira H.F."/>
            <person name="Nusbaum C."/>
            <person name="O'Leary S.B."/>
            <person name="Orvis J."/>
            <person name="Pertea M."/>
            <person name="Quesneville H."/>
            <person name="Reidenbach K.R."/>
            <person name="Rogers Y.-H.C."/>
            <person name="Roth C.W."/>
            <person name="Schneider J.R."/>
            <person name="Schatz M."/>
            <person name="Shumway M."/>
            <person name="Stanke M."/>
            <person name="Stinson E.O."/>
            <person name="Tubio J.M.C."/>
            <person name="Vanzee J.P."/>
            <person name="Verjovski-Almeida S."/>
            <person name="Werner D."/>
            <person name="White O.R."/>
            <person name="Wyder S."/>
            <person name="Zeng Q."/>
            <person name="Zhao Q."/>
            <person name="Zhao Y."/>
            <person name="Hill C.A."/>
            <person name="Raikhel A.S."/>
            <person name="Soares M.B."/>
            <person name="Knudson D.L."/>
            <person name="Lee N.H."/>
            <person name="Galagan J."/>
            <person name="Salzberg S.L."/>
            <person name="Paulsen I.T."/>
            <person name="Dimopoulos G."/>
            <person name="Collins F.H."/>
            <person name="Bruce B."/>
            <person name="Fraser-Liggett C.M."/>
            <person name="Severson D.W."/>
        </authorList>
    </citation>
    <scope>NUCLEOTIDE SEQUENCE [LARGE SCALE GENOMIC DNA]</scope>
    <source>
        <strain>LVPib12</strain>
    </source>
</reference>
<sequence>MEVDGETQIEELECDIRTLRKQLKAKVQQLKTLKKHFQKNCINKLNNNEIARYSRQIILSEIGVQGQLKLKRSSVLVVGAGGLGCPSALYLAGAGIGRIGILDYDEVELTNLHRQLLHTECSVGLTKVESVRSYLEELNSQIEIVTHHIQLTSDNALQTLESYDIVVDATDNVATRYLLNDACVLLKKPLVSGSALQLEGQLTVYNFNGGPCYRCLFPNPPPPETVTNCGDGGVLGAITGVIGALQALETIKIILGNSGVLSGRLLLFDGHQSTFRNLKLRPKKADCAVCSDNPSLTKLIDYEQFCSMKATDKDSHLNLLAPHERITVQEYKSLAESNVPHLLVDVRGANQFEICQLPASINVPIDDILKNRRTAEVTQLAATGGPVFVVCRRGNDSQLAVRHLSQLFQEQGLAPPRDIVGGLHAWTHNIDPEFPIY</sequence>
<accession>Q17CA7</accession>
<gene>
    <name type="ORF">AAEL004607</name>
</gene>
<comment type="function">
    <text evidence="2">Plays a central role in 2-thiolation of mcm(5)S(2)U at tRNA wobble positions of cytosolic tRNA(Lys), tRNA(Glu) and tRNA(Gln). Also essential during biosynthesis of the molybdenum cofactor. Acts by mediating the C-terminal thiocarboxylation of sulfur carriers URM1 and MOCS2A. Its N-terminus first activates URM1 and MOCS2A as acyl-adenylates (-COAMP), then the persulfide sulfur on the catalytic cysteine is transferred to URM1 and MOCS2A to form thiocarboxylation (-COSH) of their C-terminus. The reaction probably involves hydrogen sulfide that is generated from the persulfide intermediate and that acts as a nucleophile towards URM1 and MOCS2A. Subsequently, a transient disulfide bond is formed. Does not use thiosulfate as sulfur donor; NFS1 probably acting as a sulfur donor for thiocarboxylation reactions.</text>
</comment>
<comment type="catalytic activity">
    <reaction evidence="2">
        <text>[molybdopterin-synthase sulfur-carrier protein]-C-terminal Gly-Gly + ATP + H(+) = [molybdopterin-synthase sulfur-carrier protein]-C-terminal Gly-Gly-AMP + diphosphate</text>
        <dbReference type="Rhea" id="RHEA:43616"/>
        <dbReference type="Rhea" id="RHEA-COMP:12159"/>
        <dbReference type="Rhea" id="RHEA-COMP:12202"/>
        <dbReference type="ChEBI" id="CHEBI:15378"/>
        <dbReference type="ChEBI" id="CHEBI:30616"/>
        <dbReference type="ChEBI" id="CHEBI:33019"/>
        <dbReference type="ChEBI" id="CHEBI:90618"/>
        <dbReference type="ChEBI" id="CHEBI:90778"/>
        <dbReference type="EC" id="2.7.7.80"/>
    </reaction>
</comment>
<comment type="catalytic activity">
    <reaction evidence="2">
        <text>[molybdopterin-synthase sulfur-carrier protein]-C-terminal Gly-Gly-AMP + S-sulfanyl-L-cysteinyl-[cysteine desulfurase] + AH2 = [molybdopterin-synthase sulfur-carrier protein]-C-terminal-Gly-aminoethanethioate + L-cysteinyl-[cysteine desulfurase] + A + AMP + 2 H(+)</text>
        <dbReference type="Rhea" id="RHEA:48612"/>
        <dbReference type="Rhea" id="RHEA-COMP:12157"/>
        <dbReference type="Rhea" id="RHEA-COMP:12158"/>
        <dbReference type="Rhea" id="RHEA-COMP:12159"/>
        <dbReference type="Rhea" id="RHEA-COMP:19907"/>
        <dbReference type="ChEBI" id="CHEBI:13193"/>
        <dbReference type="ChEBI" id="CHEBI:15378"/>
        <dbReference type="ChEBI" id="CHEBI:17499"/>
        <dbReference type="ChEBI" id="CHEBI:29950"/>
        <dbReference type="ChEBI" id="CHEBI:61963"/>
        <dbReference type="ChEBI" id="CHEBI:90618"/>
        <dbReference type="ChEBI" id="CHEBI:232372"/>
        <dbReference type="ChEBI" id="CHEBI:456215"/>
        <dbReference type="EC" id="2.8.1.11"/>
    </reaction>
</comment>
<comment type="cofactor">
    <cofactor evidence="2">
        <name>Zn(2+)</name>
        <dbReference type="ChEBI" id="CHEBI:29105"/>
    </cofactor>
    <text evidence="2">Binds 1 zinc ion per subunit.</text>
</comment>
<comment type="pathway">
    <text evidence="2">tRNA modification; 5-methoxycarbonylmethyl-2-thiouridine-tRNA biosynthesis.</text>
</comment>
<comment type="pathway">
    <text evidence="2">Cofactor biosynthesis; molybdopterin biosynthesis.</text>
</comment>
<comment type="subcellular location">
    <subcellularLocation>
        <location evidence="1">Cytoplasm</location>
        <location evidence="1">Cytosol</location>
    </subcellularLocation>
</comment>
<comment type="similarity">
    <text evidence="2">In the N-terminal section; belongs to the HesA/MoeB/ThiF family. UBA4 subfamily.</text>
</comment>
<proteinExistence type="inferred from homology"/>
<dbReference type="EC" id="2.7.7.80" evidence="2"/>
<dbReference type="EC" id="2.8.1.11" evidence="2"/>
<dbReference type="EMBL" id="CH477310">
    <property type="protein sequence ID" value="EAT43968.1"/>
    <property type="molecule type" value="Genomic_DNA"/>
</dbReference>
<dbReference type="RefSeq" id="XP_001649510.1">
    <property type="nucleotide sequence ID" value="XM_001649460.1"/>
</dbReference>
<dbReference type="SMR" id="Q17CA7"/>
<dbReference type="FunCoup" id="Q17CA7">
    <property type="interactions" value="400"/>
</dbReference>
<dbReference type="STRING" id="7159.Q17CA7"/>
<dbReference type="PaxDb" id="7159-AAEL004607-PA"/>
<dbReference type="GeneID" id="5565143"/>
<dbReference type="KEGG" id="aag:5565143"/>
<dbReference type="CTD" id="34187"/>
<dbReference type="VEuPathDB" id="VectorBase:AAEL004607"/>
<dbReference type="eggNOG" id="KOG2017">
    <property type="taxonomic scope" value="Eukaryota"/>
</dbReference>
<dbReference type="HOGENOM" id="CLU_013325_1_2_1"/>
<dbReference type="InParanoid" id="Q17CA7"/>
<dbReference type="OMA" id="IPDVGMD"/>
<dbReference type="OrthoDB" id="10261062at2759"/>
<dbReference type="PhylomeDB" id="Q17CA7"/>
<dbReference type="UniPathway" id="UPA00344"/>
<dbReference type="UniPathway" id="UPA00988"/>
<dbReference type="Proteomes" id="UP000008820">
    <property type="component" value="Unassembled WGS sequence"/>
</dbReference>
<dbReference type="Proteomes" id="UP000682892">
    <property type="component" value="Chromosome 1"/>
</dbReference>
<dbReference type="GO" id="GO:0005829">
    <property type="term" value="C:cytosol"/>
    <property type="evidence" value="ECO:0000250"/>
    <property type="project" value="UniProtKB"/>
</dbReference>
<dbReference type="GO" id="GO:0005524">
    <property type="term" value="F:ATP binding"/>
    <property type="evidence" value="ECO:0007669"/>
    <property type="project" value="UniProtKB-KW"/>
</dbReference>
<dbReference type="GO" id="GO:0046872">
    <property type="term" value="F:metal ion binding"/>
    <property type="evidence" value="ECO:0007669"/>
    <property type="project" value="UniProtKB-KW"/>
</dbReference>
<dbReference type="GO" id="GO:0061605">
    <property type="term" value="F:molybdopterin-synthase adenylyltransferase activity"/>
    <property type="evidence" value="ECO:0007669"/>
    <property type="project" value="UniProtKB-EC"/>
</dbReference>
<dbReference type="GO" id="GO:0061604">
    <property type="term" value="F:molybdopterin-synthase sulfurtransferase activity"/>
    <property type="evidence" value="ECO:0000250"/>
    <property type="project" value="UniProtKB"/>
</dbReference>
<dbReference type="GO" id="GO:0004792">
    <property type="term" value="F:thiosulfate-cyanide sulfurtransferase activity"/>
    <property type="evidence" value="ECO:0007669"/>
    <property type="project" value="TreeGrafter"/>
</dbReference>
<dbReference type="GO" id="GO:0042292">
    <property type="term" value="F:URM1 activating enzyme activity"/>
    <property type="evidence" value="ECO:0007669"/>
    <property type="project" value="TreeGrafter"/>
</dbReference>
<dbReference type="GO" id="GO:0006777">
    <property type="term" value="P:Mo-molybdopterin cofactor biosynthetic process"/>
    <property type="evidence" value="ECO:0000250"/>
    <property type="project" value="UniProtKB"/>
</dbReference>
<dbReference type="GO" id="GO:0032447">
    <property type="term" value="P:protein urmylation"/>
    <property type="evidence" value="ECO:0007669"/>
    <property type="project" value="TreeGrafter"/>
</dbReference>
<dbReference type="GO" id="GO:0002143">
    <property type="term" value="P:tRNA wobble position uridine thiolation"/>
    <property type="evidence" value="ECO:0007669"/>
    <property type="project" value="InterPro"/>
</dbReference>
<dbReference type="CDD" id="cd00757">
    <property type="entry name" value="ThiF_MoeB_HesA_family"/>
    <property type="match status" value="1"/>
</dbReference>
<dbReference type="FunFam" id="3.40.250.10:FF:000014">
    <property type="entry name" value="Adenylyltransferase and sulfurtransferase MOCS3"/>
    <property type="match status" value="1"/>
</dbReference>
<dbReference type="FunFam" id="3.40.50.720:FF:000206">
    <property type="entry name" value="Adenylyltransferase and sulfurtransferase MOCS3"/>
    <property type="match status" value="1"/>
</dbReference>
<dbReference type="Gene3D" id="3.40.50.720">
    <property type="entry name" value="NAD(P)-binding Rossmann-like Domain"/>
    <property type="match status" value="1"/>
</dbReference>
<dbReference type="Gene3D" id="3.40.250.10">
    <property type="entry name" value="Rhodanese-like domain"/>
    <property type="match status" value="1"/>
</dbReference>
<dbReference type="HAMAP" id="MF_03049">
    <property type="entry name" value="MOCS3_Uba4"/>
    <property type="match status" value="1"/>
</dbReference>
<dbReference type="InterPro" id="IPR028885">
    <property type="entry name" value="MOCS3/Uba4"/>
</dbReference>
<dbReference type="InterPro" id="IPR001763">
    <property type="entry name" value="Rhodanese-like_dom"/>
</dbReference>
<dbReference type="InterPro" id="IPR036873">
    <property type="entry name" value="Rhodanese-like_dom_sf"/>
</dbReference>
<dbReference type="InterPro" id="IPR045886">
    <property type="entry name" value="ThiF/MoeB/HesA"/>
</dbReference>
<dbReference type="InterPro" id="IPR000594">
    <property type="entry name" value="ThiF_NAD_FAD-bd"/>
</dbReference>
<dbReference type="InterPro" id="IPR035985">
    <property type="entry name" value="Ubiquitin-activating_enz"/>
</dbReference>
<dbReference type="NCBIfam" id="NF004281">
    <property type="entry name" value="PRK05690.1"/>
    <property type="match status" value="1"/>
</dbReference>
<dbReference type="PANTHER" id="PTHR10953:SF102">
    <property type="entry name" value="ADENYLYLTRANSFERASE AND SULFURTRANSFERASE MOCS3"/>
    <property type="match status" value="1"/>
</dbReference>
<dbReference type="PANTHER" id="PTHR10953">
    <property type="entry name" value="UBIQUITIN-ACTIVATING ENZYME E1"/>
    <property type="match status" value="1"/>
</dbReference>
<dbReference type="Pfam" id="PF00581">
    <property type="entry name" value="Rhodanese"/>
    <property type="match status" value="1"/>
</dbReference>
<dbReference type="Pfam" id="PF00899">
    <property type="entry name" value="ThiF"/>
    <property type="match status" value="1"/>
</dbReference>
<dbReference type="SMART" id="SM00450">
    <property type="entry name" value="RHOD"/>
    <property type="match status" value="1"/>
</dbReference>
<dbReference type="SUPFAM" id="SSF69572">
    <property type="entry name" value="Activating enzymes of the ubiquitin-like proteins"/>
    <property type="match status" value="1"/>
</dbReference>
<dbReference type="PROSITE" id="PS50206">
    <property type="entry name" value="RHODANESE_3"/>
    <property type="match status" value="1"/>
</dbReference>
<organism>
    <name type="scientific">Aedes aegypti</name>
    <name type="common">Yellowfever mosquito</name>
    <name type="synonym">Culex aegypti</name>
    <dbReference type="NCBI Taxonomy" id="7159"/>
    <lineage>
        <taxon>Eukaryota</taxon>
        <taxon>Metazoa</taxon>
        <taxon>Ecdysozoa</taxon>
        <taxon>Arthropoda</taxon>
        <taxon>Hexapoda</taxon>
        <taxon>Insecta</taxon>
        <taxon>Pterygota</taxon>
        <taxon>Neoptera</taxon>
        <taxon>Endopterygota</taxon>
        <taxon>Diptera</taxon>
        <taxon>Nematocera</taxon>
        <taxon>Culicoidea</taxon>
        <taxon>Culicidae</taxon>
        <taxon>Culicinae</taxon>
        <taxon>Aedini</taxon>
        <taxon>Aedes</taxon>
        <taxon>Stegomyia</taxon>
    </lineage>
</organism>
<keyword id="KW-0067">ATP-binding</keyword>
<keyword id="KW-0963">Cytoplasm</keyword>
<keyword id="KW-0479">Metal-binding</keyword>
<keyword id="KW-0501">Molybdenum cofactor biosynthesis</keyword>
<keyword id="KW-0511">Multifunctional enzyme</keyword>
<keyword id="KW-0547">Nucleotide-binding</keyword>
<keyword id="KW-0548">Nucleotidyltransferase</keyword>
<keyword id="KW-1185">Reference proteome</keyword>
<keyword id="KW-0808">Transferase</keyword>
<keyword id="KW-0819">tRNA processing</keyword>
<keyword id="KW-0862">Zinc</keyword>